<sequence length="91" mass="9868">MASVSISCPSCSATDGVVRNGKSTAGHQRYLCSHCRKTWQLQFTYTASQPGTHQKIIDMAMNGVGCRATARIMGVGLNTILRHLKNSGRSR</sequence>
<reference key="1">
    <citation type="journal article" date="1984" name="J. Gen. Appl. Microbiol.">
        <title>An evolutionary analysis of iso-IS1 elements from Escherichia coli and Shigella strains.</title>
        <authorList>
            <person name="Ohtsubo E."/>
            <person name="Ohtsubo H."/>
            <person name="Doroszkiewicz W."/>
            <person name="Nyman K."/>
            <person name="Allen D."/>
            <person name="Davison D."/>
        </authorList>
    </citation>
    <scope>NUCLEOTIDE SEQUENCE [GENOMIC DNA]</scope>
</reference>
<gene>
    <name type="primary">insA</name>
</gene>
<feature type="chain" id="PRO_0000075395" description="Insertion element IS1 protein InsA">
    <location>
        <begin position="1"/>
        <end position="91"/>
    </location>
</feature>
<dbReference type="EMBL" id="M37615">
    <property type="protein sequence ID" value="AAA96693.1"/>
    <property type="molecule type" value="Genomic_DNA"/>
</dbReference>
<dbReference type="RefSeq" id="WP_000179213.1">
    <property type="nucleotide sequence ID" value="NZ_UIQC01000307.1"/>
</dbReference>
<dbReference type="SMR" id="P0ADH2"/>
<dbReference type="GO" id="GO:0006313">
    <property type="term" value="P:DNA transposition"/>
    <property type="evidence" value="ECO:0007669"/>
    <property type="project" value="InterPro"/>
</dbReference>
<dbReference type="InterPro" id="IPR024431">
    <property type="entry name" value="InsA_HTH_dom"/>
</dbReference>
<dbReference type="InterPro" id="IPR003220">
    <property type="entry name" value="InsA_N_dom_Znf"/>
</dbReference>
<dbReference type="InterPro" id="IPR051252">
    <property type="entry name" value="IS1_transposase_InsA"/>
</dbReference>
<dbReference type="PANTHER" id="PTHR47923">
    <property type="entry name" value="INSERTION ELEMENT IS1 1 PROTEIN INSA-RELATED"/>
    <property type="match status" value="1"/>
</dbReference>
<dbReference type="PANTHER" id="PTHR47923:SF1">
    <property type="entry name" value="INSERTION ELEMENT IS1 1 PROTEIN INSA-RELATED"/>
    <property type="match status" value="1"/>
</dbReference>
<dbReference type="Pfam" id="PF12759">
    <property type="entry name" value="HTH_Tnp_IS1"/>
    <property type="match status" value="1"/>
</dbReference>
<dbReference type="Pfam" id="PF03811">
    <property type="entry name" value="Zn_ribbon_InsA"/>
    <property type="match status" value="1"/>
</dbReference>
<proteinExistence type="inferred from homology"/>
<comment type="function">
    <text>Absolutely required for transposition of IS1.</text>
</comment>
<comment type="similarity">
    <text evidence="1">Belongs to the IS1 elements InsA family.</text>
</comment>
<evidence type="ECO:0000305" key="1"/>
<protein>
    <recommendedName>
        <fullName>Insertion element IS1 protein InsA</fullName>
    </recommendedName>
</protein>
<organism>
    <name type="scientific">Shigella sonnei</name>
    <dbReference type="NCBI Taxonomy" id="624"/>
    <lineage>
        <taxon>Bacteria</taxon>
        <taxon>Pseudomonadati</taxon>
        <taxon>Pseudomonadota</taxon>
        <taxon>Gammaproteobacteria</taxon>
        <taxon>Enterobacterales</taxon>
        <taxon>Enterobacteriaceae</taxon>
        <taxon>Shigella</taxon>
    </lineage>
</organism>
<accession>P0ADH2</accession>
<accession>P03827</accession>
<keyword id="KW-0233">DNA recombination</keyword>
<keyword id="KW-0814">Transposable element</keyword>
<keyword id="KW-0815">Transposition</keyword>
<name>INSA_SHISO</name>